<sequence>MPANAKVTIRYGKYEACGTVEYREDRLDGLQAVLKADGHEVELKQIEDWNVVELIVNGETVYTCNITELDFGGDGKLDPLCAEALQAVQTAY</sequence>
<reference key="1">
    <citation type="journal article" date="2008" name="Nature">
        <title>The amphioxus genome and the evolution of the chordate karyotype.</title>
        <authorList>
            <person name="Putnam N.H."/>
            <person name="Butts T."/>
            <person name="Ferrier D.E.K."/>
            <person name="Furlong R.F."/>
            <person name="Hellsten U."/>
            <person name="Kawashima T."/>
            <person name="Robinson-Rechavi M."/>
            <person name="Shoguchi E."/>
            <person name="Terry A."/>
            <person name="Yu J.-K."/>
            <person name="Benito-Gutierrez E.L."/>
            <person name="Dubchak I."/>
            <person name="Garcia-Fernandez J."/>
            <person name="Gibson-Brown J.J."/>
            <person name="Grigoriev I.V."/>
            <person name="Horton A.C."/>
            <person name="de Jong P.J."/>
            <person name="Jurka J."/>
            <person name="Kapitonov V.V."/>
            <person name="Kohara Y."/>
            <person name="Kuroki Y."/>
            <person name="Lindquist E."/>
            <person name="Lucas S."/>
            <person name="Osoegawa K."/>
            <person name="Pennacchio L.A."/>
            <person name="Salamov A.A."/>
            <person name="Satou Y."/>
            <person name="Sauka-Spengler T."/>
            <person name="Schmutz J."/>
            <person name="Shin-I T."/>
            <person name="Toyoda A."/>
            <person name="Bronner-Fraser M."/>
            <person name="Fujiyama A."/>
            <person name="Holland L.Z."/>
            <person name="Holland P.W.H."/>
            <person name="Satoh N."/>
            <person name="Rokhsar D.S."/>
        </authorList>
    </citation>
    <scope>NUCLEOTIDE SEQUENCE [LARGE SCALE GENOMIC DNA]</scope>
    <source>
        <strain>S238N-H82</strain>
        <tissue>Testis</tissue>
    </source>
</reference>
<gene>
    <name type="ORF">BRAFLDRAFT_270831</name>
</gene>
<accession>B6LS00</accession>
<accession>C3Z4Q0</accession>
<dbReference type="EMBL" id="GG666580">
    <property type="protein sequence ID" value="EEN52489.1"/>
    <property type="molecule type" value="Genomic_DNA"/>
</dbReference>
<dbReference type="RefSeq" id="XP_002596477.1">
    <property type="nucleotide sequence ID" value="XM_002596431.1"/>
</dbReference>
<dbReference type="eggNOG" id="ENOG502S4W1">
    <property type="taxonomic scope" value="Eukaryota"/>
</dbReference>
<dbReference type="InParanoid" id="B6LS00"/>
<dbReference type="OMA" id="VEHRTYR"/>
<dbReference type="OrthoDB" id="10003460at2759"/>
<dbReference type="Proteomes" id="UP000001554">
    <property type="component" value="Unplaced"/>
</dbReference>
<dbReference type="InterPro" id="IPR027885">
    <property type="entry name" value="UPF0728"/>
</dbReference>
<dbReference type="PANTHER" id="PTHR28448">
    <property type="entry name" value="UPF0728 PROTEIN C10ORF53"/>
    <property type="match status" value="1"/>
</dbReference>
<dbReference type="PANTHER" id="PTHR28448:SF1">
    <property type="entry name" value="UPF0728 PROTEIN C10ORF53"/>
    <property type="match status" value="1"/>
</dbReference>
<dbReference type="Pfam" id="PF15092">
    <property type="entry name" value="UPF0728"/>
    <property type="match status" value="1"/>
</dbReference>
<organism>
    <name type="scientific">Branchiostoma floridae</name>
    <name type="common">Florida lancelet</name>
    <name type="synonym">Amphioxus</name>
    <dbReference type="NCBI Taxonomy" id="7739"/>
    <lineage>
        <taxon>Eukaryota</taxon>
        <taxon>Metazoa</taxon>
        <taxon>Chordata</taxon>
        <taxon>Cephalochordata</taxon>
        <taxon>Leptocardii</taxon>
        <taxon>Amphioxiformes</taxon>
        <taxon>Branchiostomatidae</taxon>
        <taxon>Branchiostoma</taxon>
    </lineage>
</organism>
<protein>
    <recommendedName>
        <fullName>UPF0728 protein</fullName>
    </recommendedName>
</protein>
<feature type="chain" id="PRO_0000369436" description="UPF0728 protein">
    <location>
        <begin position="1"/>
        <end position="92"/>
    </location>
</feature>
<comment type="similarity">
    <text evidence="1">Belongs to the UPF0728 family.</text>
</comment>
<name>U728_BRAFL</name>
<proteinExistence type="inferred from homology"/>
<keyword id="KW-1185">Reference proteome</keyword>
<evidence type="ECO:0000305" key="1"/>